<keyword id="KW-0414">Isoprene biosynthesis</keyword>
<keyword id="KW-0460">Magnesium</keyword>
<keyword id="KW-0479">Metal-binding</keyword>
<keyword id="KW-1185">Reference proteome</keyword>
<keyword id="KW-0784">Thiamine biosynthesis</keyword>
<keyword id="KW-0786">Thiamine pyrophosphate</keyword>
<keyword id="KW-0808">Transferase</keyword>
<sequence length="620" mass="67645">MSFDIAKYPTLALVDSTSELRLLPKESLPKLCDELRRYLLDSVSRSSGHFASGLGTVELTVALHYVYNTPFDQLIWDVGHQAYPHKILTGRRDKIGTIRQKGGLHPFPWRGESEYDVLSVGHSSTSISAGIGIAVAAEKEGKDRRTVCVIGDGAITAGMAFEAMNHAGDIKPDMLVILNDNEMSISENVGALNNHLAQLLSGKLYSSLREGGKKVFSGVPPIKELLKRTEEHIKGMVVPGTLFEELGFNYIGPVDGHDVLGLITTLKNMRDLKGPQFLHIMTKKGRGYEPAEKDPITFHAVPKFDPSSGCLPKSSGGLPSYSKIFGDWLCETAAKDSKLMAITPAMREGSGMVEFSRKFPDRYFDVAIAEQHAVTFAAGLAIGGYKPIVAIYSTFLQRAYDQVLHDVAIQKLPVMFAIDRAGIVGADGQTHQGAFDLSYLRCIPEMVIMTPGDENECRQMLYTGYHYNDGPTAVRYPRGNAVGVELTPLEKLPIGKGLVKRQGEKLAILNFGTLLPEAAKVAESLNATLVDMRFVKPLDETLILEMAERHEVLITLEENAIMGGAGSGVNEVLMAHRKVVPVLNIGLPDFFIPQGTQDEARAELGLDAAGIEAKIKDWLA</sequence>
<comment type="function">
    <text evidence="1">Catalyzes the acyloin condensation reaction between C atoms 2 and 3 of pyruvate and glyceraldehyde 3-phosphate to yield 1-deoxy-D-xylulose-5-phosphate (DXP).</text>
</comment>
<comment type="catalytic activity">
    <reaction evidence="1">
        <text>D-glyceraldehyde 3-phosphate + pyruvate + H(+) = 1-deoxy-D-xylulose 5-phosphate + CO2</text>
        <dbReference type="Rhea" id="RHEA:12605"/>
        <dbReference type="ChEBI" id="CHEBI:15361"/>
        <dbReference type="ChEBI" id="CHEBI:15378"/>
        <dbReference type="ChEBI" id="CHEBI:16526"/>
        <dbReference type="ChEBI" id="CHEBI:57792"/>
        <dbReference type="ChEBI" id="CHEBI:59776"/>
        <dbReference type="EC" id="2.2.1.7"/>
    </reaction>
</comment>
<comment type="cofactor">
    <cofactor evidence="1">
        <name>Mg(2+)</name>
        <dbReference type="ChEBI" id="CHEBI:18420"/>
    </cofactor>
    <text evidence="1">Binds 1 Mg(2+) ion per subunit.</text>
</comment>
<comment type="cofactor">
    <cofactor evidence="1">
        <name>thiamine diphosphate</name>
        <dbReference type="ChEBI" id="CHEBI:58937"/>
    </cofactor>
    <text evidence="1">Binds 1 thiamine pyrophosphate per subunit.</text>
</comment>
<comment type="pathway">
    <text evidence="1">Metabolic intermediate biosynthesis; 1-deoxy-D-xylulose 5-phosphate biosynthesis; 1-deoxy-D-xylulose 5-phosphate from D-glyceraldehyde 3-phosphate and pyruvate: step 1/1.</text>
</comment>
<comment type="subunit">
    <text evidence="1">Homodimer.</text>
</comment>
<comment type="similarity">
    <text evidence="1">Belongs to the transketolase family. DXPS subfamily.</text>
</comment>
<name>DXS_CITK8</name>
<proteinExistence type="inferred from homology"/>
<evidence type="ECO:0000255" key="1">
    <source>
        <dbReference type="HAMAP-Rule" id="MF_00315"/>
    </source>
</evidence>
<feature type="chain" id="PRO_1000019018" description="1-deoxy-D-xylulose-5-phosphate synthase">
    <location>
        <begin position="1"/>
        <end position="620"/>
    </location>
</feature>
<feature type="binding site" evidence="1">
    <location>
        <position position="80"/>
    </location>
    <ligand>
        <name>thiamine diphosphate</name>
        <dbReference type="ChEBI" id="CHEBI:58937"/>
    </ligand>
</feature>
<feature type="binding site" evidence="1">
    <location>
        <begin position="121"/>
        <end position="123"/>
    </location>
    <ligand>
        <name>thiamine diphosphate</name>
        <dbReference type="ChEBI" id="CHEBI:58937"/>
    </ligand>
</feature>
<feature type="binding site" evidence="1">
    <location>
        <position position="152"/>
    </location>
    <ligand>
        <name>Mg(2+)</name>
        <dbReference type="ChEBI" id="CHEBI:18420"/>
    </ligand>
</feature>
<feature type="binding site" evidence="1">
    <location>
        <begin position="153"/>
        <end position="154"/>
    </location>
    <ligand>
        <name>thiamine diphosphate</name>
        <dbReference type="ChEBI" id="CHEBI:58937"/>
    </ligand>
</feature>
<feature type="binding site" evidence="1">
    <location>
        <position position="181"/>
    </location>
    <ligand>
        <name>Mg(2+)</name>
        <dbReference type="ChEBI" id="CHEBI:18420"/>
    </ligand>
</feature>
<feature type="binding site" evidence="1">
    <location>
        <position position="181"/>
    </location>
    <ligand>
        <name>thiamine diphosphate</name>
        <dbReference type="ChEBI" id="CHEBI:58937"/>
    </ligand>
</feature>
<feature type="binding site" evidence="1">
    <location>
        <position position="288"/>
    </location>
    <ligand>
        <name>thiamine diphosphate</name>
        <dbReference type="ChEBI" id="CHEBI:58937"/>
    </ligand>
</feature>
<feature type="binding site" evidence="1">
    <location>
        <position position="370"/>
    </location>
    <ligand>
        <name>thiamine diphosphate</name>
        <dbReference type="ChEBI" id="CHEBI:58937"/>
    </ligand>
</feature>
<accession>A8AK34</accession>
<reference key="1">
    <citation type="submission" date="2007-08" db="EMBL/GenBank/DDBJ databases">
        <authorList>
            <consortium name="The Citrobacter koseri Genome Sequencing Project"/>
            <person name="McClelland M."/>
            <person name="Sanderson E.K."/>
            <person name="Porwollik S."/>
            <person name="Spieth J."/>
            <person name="Clifton W.S."/>
            <person name="Latreille P."/>
            <person name="Courtney L."/>
            <person name="Wang C."/>
            <person name="Pepin K."/>
            <person name="Bhonagiri V."/>
            <person name="Nash W."/>
            <person name="Johnson M."/>
            <person name="Thiruvilangam P."/>
            <person name="Wilson R."/>
        </authorList>
    </citation>
    <scope>NUCLEOTIDE SEQUENCE [LARGE SCALE GENOMIC DNA]</scope>
    <source>
        <strain>ATCC BAA-895 / CDC 4225-83 / SGSC4696</strain>
    </source>
</reference>
<organism>
    <name type="scientific">Citrobacter koseri (strain ATCC BAA-895 / CDC 4225-83 / SGSC4696)</name>
    <dbReference type="NCBI Taxonomy" id="290338"/>
    <lineage>
        <taxon>Bacteria</taxon>
        <taxon>Pseudomonadati</taxon>
        <taxon>Pseudomonadota</taxon>
        <taxon>Gammaproteobacteria</taxon>
        <taxon>Enterobacterales</taxon>
        <taxon>Enterobacteriaceae</taxon>
        <taxon>Citrobacter</taxon>
    </lineage>
</organism>
<dbReference type="EC" id="2.2.1.7" evidence="1"/>
<dbReference type="EMBL" id="CP000822">
    <property type="protein sequence ID" value="ABV13847.1"/>
    <property type="molecule type" value="Genomic_DNA"/>
</dbReference>
<dbReference type="RefSeq" id="WP_012133562.1">
    <property type="nucleotide sequence ID" value="NC_009792.1"/>
</dbReference>
<dbReference type="SMR" id="A8AK34"/>
<dbReference type="STRING" id="290338.CKO_02741"/>
<dbReference type="GeneID" id="45136595"/>
<dbReference type="KEGG" id="cko:CKO_02741"/>
<dbReference type="HOGENOM" id="CLU_009227_1_4_6"/>
<dbReference type="OrthoDB" id="9803371at2"/>
<dbReference type="UniPathway" id="UPA00064">
    <property type="reaction ID" value="UER00091"/>
</dbReference>
<dbReference type="Proteomes" id="UP000008148">
    <property type="component" value="Chromosome"/>
</dbReference>
<dbReference type="GO" id="GO:0005829">
    <property type="term" value="C:cytosol"/>
    <property type="evidence" value="ECO:0007669"/>
    <property type="project" value="TreeGrafter"/>
</dbReference>
<dbReference type="GO" id="GO:0008661">
    <property type="term" value="F:1-deoxy-D-xylulose-5-phosphate synthase activity"/>
    <property type="evidence" value="ECO:0007669"/>
    <property type="project" value="UniProtKB-UniRule"/>
</dbReference>
<dbReference type="GO" id="GO:0000287">
    <property type="term" value="F:magnesium ion binding"/>
    <property type="evidence" value="ECO:0007669"/>
    <property type="project" value="UniProtKB-UniRule"/>
</dbReference>
<dbReference type="GO" id="GO:0030976">
    <property type="term" value="F:thiamine pyrophosphate binding"/>
    <property type="evidence" value="ECO:0007669"/>
    <property type="project" value="UniProtKB-UniRule"/>
</dbReference>
<dbReference type="GO" id="GO:0052865">
    <property type="term" value="P:1-deoxy-D-xylulose 5-phosphate biosynthetic process"/>
    <property type="evidence" value="ECO:0007669"/>
    <property type="project" value="UniProtKB-UniPathway"/>
</dbReference>
<dbReference type="GO" id="GO:0019288">
    <property type="term" value="P:isopentenyl diphosphate biosynthetic process, methylerythritol 4-phosphate pathway"/>
    <property type="evidence" value="ECO:0007669"/>
    <property type="project" value="TreeGrafter"/>
</dbReference>
<dbReference type="GO" id="GO:0016114">
    <property type="term" value="P:terpenoid biosynthetic process"/>
    <property type="evidence" value="ECO:0007669"/>
    <property type="project" value="UniProtKB-UniRule"/>
</dbReference>
<dbReference type="GO" id="GO:0009228">
    <property type="term" value="P:thiamine biosynthetic process"/>
    <property type="evidence" value="ECO:0007669"/>
    <property type="project" value="UniProtKB-UniRule"/>
</dbReference>
<dbReference type="CDD" id="cd02007">
    <property type="entry name" value="TPP_DXS"/>
    <property type="match status" value="1"/>
</dbReference>
<dbReference type="CDD" id="cd07033">
    <property type="entry name" value="TPP_PYR_DXS_TK_like"/>
    <property type="match status" value="1"/>
</dbReference>
<dbReference type="FunFam" id="3.40.50.920:FF:000002">
    <property type="entry name" value="1-deoxy-D-xylulose-5-phosphate synthase"/>
    <property type="match status" value="1"/>
</dbReference>
<dbReference type="FunFam" id="3.40.50.970:FF:000005">
    <property type="entry name" value="1-deoxy-D-xylulose-5-phosphate synthase"/>
    <property type="match status" value="1"/>
</dbReference>
<dbReference type="Gene3D" id="3.40.50.920">
    <property type="match status" value="1"/>
</dbReference>
<dbReference type="Gene3D" id="3.40.50.970">
    <property type="match status" value="2"/>
</dbReference>
<dbReference type="HAMAP" id="MF_00315">
    <property type="entry name" value="DXP_synth"/>
    <property type="match status" value="1"/>
</dbReference>
<dbReference type="InterPro" id="IPR005477">
    <property type="entry name" value="Dxylulose-5-P_synthase"/>
</dbReference>
<dbReference type="InterPro" id="IPR029061">
    <property type="entry name" value="THDP-binding"/>
</dbReference>
<dbReference type="InterPro" id="IPR009014">
    <property type="entry name" value="Transketo_C/PFOR_II"/>
</dbReference>
<dbReference type="InterPro" id="IPR005475">
    <property type="entry name" value="Transketolase-like_Pyr-bd"/>
</dbReference>
<dbReference type="InterPro" id="IPR020826">
    <property type="entry name" value="Transketolase_BS"/>
</dbReference>
<dbReference type="InterPro" id="IPR033248">
    <property type="entry name" value="Transketolase_C"/>
</dbReference>
<dbReference type="InterPro" id="IPR049557">
    <property type="entry name" value="Transketolase_CS"/>
</dbReference>
<dbReference type="NCBIfam" id="TIGR00204">
    <property type="entry name" value="dxs"/>
    <property type="match status" value="1"/>
</dbReference>
<dbReference type="NCBIfam" id="NF003933">
    <property type="entry name" value="PRK05444.2-2"/>
    <property type="match status" value="1"/>
</dbReference>
<dbReference type="PANTHER" id="PTHR43322">
    <property type="entry name" value="1-D-DEOXYXYLULOSE 5-PHOSPHATE SYNTHASE-RELATED"/>
    <property type="match status" value="1"/>
</dbReference>
<dbReference type="PANTHER" id="PTHR43322:SF5">
    <property type="entry name" value="1-DEOXY-D-XYLULOSE-5-PHOSPHATE SYNTHASE, CHLOROPLASTIC"/>
    <property type="match status" value="1"/>
</dbReference>
<dbReference type="Pfam" id="PF13292">
    <property type="entry name" value="DXP_synthase_N"/>
    <property type="match status" value="1"/>
</dbReference>
<dbReference type="Pfam" id="PF02779">
    <property type="entry name" value="Transket_pyr"/>
    <property type="match status" value="1"/>
</dbReference>
<dbReference type="Pfam" id="PF02780">
    <property type="entry name" value="Transketolase_C"/>
    <property type="match status" value="1"/>
</dbReference>
<dbReference type="SMART" id="SM00861">
    <property type="entry name" value="Transket_pyr"/>
    <property type="match status" value="1"/>
</dbReference>
<dbReference type="SUPFAM" id="SSF52518">
    <property type="entry name" value="Thiamin diphosphate-binding fold (THDP-binding)"/>
    <property type="match status" value="2"/>
</dbReference>
<dbReference type="SUPFAM" id="SSF52922">
    <property type="entry name" value="TK C-terminal domain-like"/>
    <property type="match status" value="1"/>
</dbReference>
<dbReference type="PROSITE" id="PS00801">
    <property type="entry name" value="TRANSKETOLASE_1"/>
    <property type="match status" value="1"/>
</dbReference>
<dbReference type="PROSITE" id="PS00802">
    <property type="entry name" value="TRANSKETOLASE_2"/>
    <property type="match status" value="1"/>
</dbReference>
<gene>
    <name evidence="1" type="primary">dxs</name>
    <name type="ordered locus">CKO_02741</name>
</gene>
<protein>
    <recommendedName>
        <fullName evidence="1">1-deoxy-D-xylulose-5-phosphate synthase</fullName>
        <ecNumber evidence="1">2.2.1.7</ecNumber>
    </recommendedName>
    <alternativeName>
        <fullName evidence="1">1-deoxyxylulose-5-phosphate synthase</fullName>
        <shortName evidence="1">DXP synthase</shortName>
        <shortName evidence="1">DXPS</shortName>
    </alternativeName>
</protein>